<gene>
    <name type="primary">ate1</name>
    <name type="ORF">DDB_G0269024</name>
</gene>
<feature type="chain" id="PRO_0000351082" description="Arginyl-tRNA--protein transferase 1">
    <location>
        <begin position="1"/>
        <end position="629"/>
    </location>
</feature>
<feature type="region of interest" description="Disordered" evidence="2">
    <location>
        <begin position="274"/>
        <end position="298"/>
    </location>
</feature>
<feature type="region of interest" description="Disordered" evidence="2">
    <location>
        <begin position="353"/>
        <end position="405"/>
    </location>
</feature>
<feature type="compositionally biased region" description="Low complexity" evidence="2">
    <location>
        <begin position="282"/>
        <end position="295"/>
    </location>
</feature>
<feature type="compositionally biased region" description="Acidic residues" evidence="2">
    <location>
        <begin position="356"/>
        <end position="396"/>
    </location>
</feature>
<organism>
    <name type="scientific">Dictyostelium discoideum</name>
    <name type="common">Social amoeba</name>
    <dbReference type="NCBI Taxonomy" id="44689"/>
    <lineage>
        <taxon>Eukaryota</taxon>
        <taxon>Amoebozoa</taxon>
        <taxon>Evosea</taxon>
        <taxon>Eumycetozoa</taxon>
        <taxon>Dictyostelia</taxon>
        <taxon>Dictyosteliales</taxon>
        <taxon>Dictyosteliaceae</taxon>
        <taxon>Dictyostelium</taxon>
    </lineage>
</organism>
<sequence>MERFLMQSSLSTSSLIYPHGSYDSSCNYCDAGEDKKGRICYGMVADQLTCEDYQLLIDQGWRRSGTFLYKPNNSDKKTCCPQYTIRLDTSSFKPSKDNKSTIKKFNNYILNNIIKEKDSSTTSTTKDIINTTQIKSNTKNNNNKTNDENIIKLNNDIIEIILNNEFINKFNEQDKKILKENLKIKINSNKMIKETGSYSLSFGIFNKYRSELNQHSITIDQIINFTILEFNKTINNSDYQFNLEKGQNNHINFKMINSSQILNDSTKTKTLNIQNNSNKNSTTTATTATTTTTTTNEPKHKFEISIHKPKCTDEVFSLYCKYQKIIHKEDDEKTKSGFKRFLVDSPLIPIIHPDESYDDYVYDGKDDDDDDDDKDEKEDDEDEDQEDDEDEDDGNNEDEKKITKENKEKEIKNHIYKIGKKSKTLKTRKFGEIKTPKPGYGSFHQYYRLDGKLVGVGVIDILPECLSSVYFFYDPDFNFLSLGKYSALNEIEWVQKVSQSIPQLKYYYMGYYIHSCQKMKYKANYQPSQLLCLETFKWVEFKKAISFLQPDKKYSRFYFDENENNNNEKLTYFEKEPELLERVKFRQKNFTFHFSDVSVRFQNLLKDQVIDYINHVGPELTKELIFYFK</sequence>
<name>ATE1_DICDI</name>
<comment type="function">
    <text evidence="1">Involved in the post-translational conjugation of arginine to the N-terminal aspartate or glutamate of a protein. This arginylation is required for degradation of the protein via the ubiquitin pathway. Does not arginylate cysteine residues (By similarity).</text>
</comment>
<comment type="catalytic activity">
    <reaction>
        <text>an N-terminal L-alpha-aminoacyl-[protein] + L-arginyl-tRNA(Arg) = an N-terminal L-arginyl-L-aminoacyl-[protein] + tRNA(Arg) + H(+)</text>
        <dbReference type="Rhea" id="RHEA:10208"/>
        <dbReference type="Rhea" id="RHEA-COMP:9658"/>
        <dbReference type="Rhea" id="RHEA-COMP:9673"/>
        <dbReference type="Rhea" id="RHEA-COMP:10636"/>
        <dbReference type="Rhea" id="RHEA-COMP:10638"/>
        <dbReference type="ChEBI" id="CHEBI:15378"/>
        <dbReference type="ChEBI" id="CHEBI:78442"/>
        <dbReference type="ChEBI" id="CHEBI:78513"/>
        <dbReference type="ChEBI" id="CHEBI:78597"/>
        <dbReference type="ChEBI" id="CHEBI:83562"/>
        <dbReference type="EC" id="2.3.2.8"/>
    </reaction>
</comment>
<comment type="similarity">
    <text evidence="3">Belongs to the R-transferase family.</text>
</comment>
<evidence type="ECO:0000250" key="1"/>
<evidence type="ECO:0000256" key="2">
    <source>
        <dbReference type="SAM" id="MobiDB-lite"/>
    </source>
</evidence>
<evidence type="ECO:0000305" key="3"/>
<proteinExistence type="inferred from homology"/>
<reference key="1">
    <citation type="journal article" date="2005" name="Nature">
        <title>The genome of the social amoeba Dictyostelium discoideum.</title>
        <authorList>
            <person name="Eichinger L."/>
            <person name="Pachebat J.A."/>
            <person name="Gloeckner G."/>
            <person name="Rajandream M.A."/>
            <person name="Sucgang R."/>
            <person name="Berriman M."/>
            <person name="Song J."/>
            <person name="Olsen R."/>
            <person name="Szafranski K."/>
            <person name="Xu Q."/>
            <person name="Tunggal B."/>
            <person name="Kummerfeld S."/>
            <person name="Madera M."/>
            <person name="Konfortov B.A."/>
            <person name="Rivero F."/>
            <person name="Bankier A.T."/>
            <person name="Lehmann R."/>
            <person name="Hamlin N."/>
            <person name="Davies R."/>
            <person name="Gaudet P."/>
            <person name="Fey P."/>
            <person name="Pilcher K."/>
            <person name="Chen G."/>
            <person name="Saunders D."/>
            <person name="Sodergren E.J."/>
            <person name="Davis P."/>
            <person name="Kerhornou A."/>
            <person name="Nie X."/>
            <person name="Hall N."/>
            <person name="Anjard C."/>
            <person name="Hemphill L."/>
            <person name="Bason N."/>
            <person name="Farbrother P."/>
            <person name="Desany B."/>
            <person name="Just E."/>
            <person name="Morio T."/>
            <person name="Rost R."/>
            <person name="Churcher C.M."/>
            <person name="Cooper J."/>
            <person name="Haydock S."/>
            <person name="van Driessche N."/>
            <person name="Cronin A."/>
            <person name="Goodhead I."/>
            <person name="Muzny D.M."/>
            <person name="Mourier T."/>
            <person name="Pain A."/>
            <person name="Lu M."/>
            <person name="Harper D."/>
            <person name="Lindsay R."/>
            <person name="Hauser H."/>
            <person name="James K.D."/>
            <person name="Quiles M."/>
            <person name="Madan Babu M."/>
            <person name="Saito T."/>
            <person name="Buchrieser C."/>
            <person name="Wardroper A."/>
            <person name="Felder M."/>
            <person name="Thangavelu M."/>
            <person name="Johnson D."/>
            <person name="Knights A."/>
            <person name="Loulseged H."/>
            <person name="Mungall K.L."/>
            <person name="Oliver K."/>
            <person name="Price C."/>
            <person name="Quail M.A."/>
            <person name="Urushihara H."/>
            <person name="Hernandez J."/>
            <person name="Rabbinowitsch E."/>
            <person name="Steffen D."/>
            <person name="Sanders M."/>
            <person name="Ma J."/>
            <person name="Kohara Y."/>
            <person name="Sharp S."/>
            <person name="Simmonds M.N."/>
            <person name="Spiegler S."/>
            <person name="Tivey A."/>
            <person name="Sugano S."/>
            <person name="White B."/>
            <person name="Walker D."/>
            <person name="Woodward J.R."/>
            <person name="Winckler T."/>
            <person name="Tanaka Y."/>
            <person name="Shaulsky G."/>
            <person name="Schleicher M."/>
            <person name="Weinstock G.M."/>
            <person name="Rosenthal A."/>
            <person name="Cox E.C."/>
            <person name="Chisholm R.L."/>
            <person name="Gibbs R.A."/>
            <person name="Loomis W.F."/>
            <person name="Platzer M."/>
            <person name="Kay R.R."/>
            <person name="Williams J.G."/>
            <person name="Dear P.H."/>
            <person name="Noegel A.A."/>
            <person name="Barrell B.G."/>
            <person name="Kuspa A."/>
        </authorList>
    </citation>
    <scope>NUCLEOTIDE SEQUENCE [LARGE SCALE GENOMIC DNA]</scope>
    <source>
        <strain>AX4</strain>
    </source>
</reference>
<dbReference type="EC" id="2.3.2.8"/>
<dbReference type="EMBL" id="AAFI02000004">
    <property type="protein sequence ID" value="EAL73101.1"/>
    <property type="molecule type" value="Genomic_DNA"/>
</dbReference>
<dbReference type="RefSeq" id="XP_647040.1">
    <property type="nucleotide sequence ID" value="XM_641948.1"/>
</dbReference>
<dbReference type="FunCoup" id="Q55EI0">
    <property type="interactions" value="927"/>
</dbReference>
<dbReference type="STRING" id="44689.Q55EI0"/>
<dbReference type="PaxDb" id="44689-DDB0238346"/>
<dbReference type="EnsemblProtists" id="EAL73101">
    <property type="protein sequence ID" value="EAL73101"/>
    <property type="gene ID" value="DDB_G0269024"/>
</dbReference>
<dbReference type="GeneID" id="8616735"/>
<dbReference type="KEGG" id="ddi:DDB_G0269024"/>
<dbReference type="dictyBase" id="DDB_G0269024">
    <property type="gene designation" value="ate1"/>
</dbReference>
<dbReference type="VEuPathDB" id="AmoebaDB:DDB_G0269024"/>
<dbReference type="eggNOG" id="KOG1193">
    <property type="taxonomic scope" value="Eukaryota"/>
</dbReference>
<dbReference type="HOGENOM" id="CLU_020349_1_0_1"/>
<dbReference type="InParanoid" id="Q55EI0"/>
<dbReference type="OMA" id="SDRMVYS"/>
<dbReference type="PhylomeDB" id="Q55EI0"/>
<dbReference type="BRENDA" id="2.3.2.8">
    <property type="organism ID" value="1939"/>
</dbReference>
<dbReference type="PRO" id="PR:Q55EI0"/>
<dbReference type="Proteomes" id="UP000002195">
    <property type="component" value="Chromosome 1"/>
</dbReference>
<dbReference type="GO" id="GO:0005737">
    <property type="term" value="C:cytoplasm"/>
    <property type="evidence" value="ECO:0000318"/>
    <property type="project" value="GO_Central"/>
</dbReference>
<dbReference type="GO" id="GO:0005829">
    <property type="term" value="C:cytosol"/>
    <property type="evidence" value="ECO:0000314"/>
    <property type="project" value="dictyBase"/>
</dbReference>
<dbReference type="GO" id="GO:0005634">
    <property type="term" value="C:nucleus"/>
    <property type="evidence" value="ECO:0000314"/>
    <property type="project" value="dictyBase"/>
</dbReference>
<dbReference type="GO" id="GO:0031143">
    <property type="term" value="C:pseudopodium"/>
    <property type="evidence" value="ECO:0000314"/>
    <property type="project" value="dictyBase"/>
</dbReference>
<dbReference type="GO" id="GO:0004057">
    <property type="term" value="F:arginyl-tRNA--protein transferase activity"/>
    <property type="evidence" value="ECO:0000314"/>
    <property type="project" value="dictyBase"/>
</dbReference>
<dbReference type="GO" id="GO:0016477">
    <property type="term" value="P:cell migration"/>
    <property type="evidence" value="ECO:0000315"/>
    <property type="project" value="dictyBase"/>
</dbReference>
<dbReference type="GO" id="GO:0031589">
    <property type="term" value="P:cell-substrate adhesion"/>
    <property type="evidence" value="ECO:0000315"/>
    <property type="project" value="dictyBase"/>
</dbReference>
<dbReference type="GO" id="GO:0010498">
    <property type="term" value="P:proteasomal protein catabolic process"/>
    <property type="evidence" value="ECO:0000318"/>
    <property type="project" value="GO_Central"/>
</dbReference>
<dbReference type="GO" id="GO:0036211">
    <property type="term" value="P:protein modification process"/>
    <property type="evidence" value="ECO:0000315"/>
    <property type="project" value="dictyBase"/>
</dbReference>
<dbReference type="InterPro" id="IPR016181">
    <property type="entry name" value="Acyl_CoA_acyltransferase"/>
</dbReference>
<dbReference type="InterPro" id="IPR017137">
    <property type="entry name" value="Arg-tRNA-P_Trfase_1_euk"/>
</dbReference>
<dbReference type="InterPro" id="IPR030700">
    <property type="entry name" value="N-end_Aminoacyl_Trfase"/>
</dbReference>
<dbReference type="InterPro" id="IPR007472">
    <property type="entry name" value="N-end_Aminoacyl_Trfase_C"/>
</dbReference>
<dbReference type="InterPro" id="IPR007471">
    <property type="entry name" value="N-end_Aminoacyl_Trfase_N"/>
</dbReference>
<dbReference type="PANTHER" id="PTHR21367">
    <property type="entry name" value="ARGININE-TRNA-PROTEIN TRANSFERASE 1"/>
    <property type="match status" value="1"/>
</dbReference>
<dbReference type="PANTHER" id="PTHR21367:SF1">
    <property type="entry name" value="ARGINYL-TRNA--PROTEIN TRANSFERASE 1"/>
    <property type="match status" value="1"/>
</dbReference>
<dbReference type="Pfam" id="PF04377">
    <property type="entry name" value="ATE_C"/>
    <property type="match status" value="1"/>
</dbReference>
<dbReference type="Pfam" id="PF04376">
    <property type="entry name" value="ATE_N"/>
    <property type="match status" value="1"/>
</dbReference>
<dbReference type="PIRSF" id="PIRSF037207">
    <property type="entry name" value="ATE1_euk"/>
    <property type="match status" value="1"/>
</dbReference>
<dbReference type="SUPFAM" id="SSF55729">
    <property type="entry name" value="Acyl-CoA N-acyltransferases (Nat)"/>
    <property type="match status" value="1"/>
</dbReference>
<protein>
    <recommendedName>
        <fullName>Arginyl-tRNA--protein transferase 1</fullName>
        <shortName>Arginyltransferase 1</shortName>
        <shortName>R-transferase 1</shortName>
        <ecNumber>2.3.2.8</ecNumber>
    </recommendedName>
    <alternativeName>
        <fullName>Arginine-tRNA--protein transferase 1</fullName>
    </alternativeName>
</protein>
<accession>Q55EI0</accession>
<keyword id="KW-0012">Acyltransferase</keyword>
<keyword id="KW-1185">Reference proteome</keyword>
<keyword id="KW-0808">Transferase</keyword>
<keyword id="KW-0833">Ubl conjugation pathway</keyword>